<evidence type="ECO:0000255" key="1">
    <source>
        <dbReference type="HAMAP-Rule" id="MF_01310"/>
    </source>
</evidence>
<evidence type="ECO:0000305" key="2"/>
<sequence>MAKRKVARKRDKKNIPSGVAHIQATFNNTIVTITDPSGAVVSWSSAGVVGFKGSRKSTPFAAQLAAEDAAKKAMEHGMRNVEVYVKGPGSGRESALRALQGAGLNVVMLRDVTPVPHNGCRPRKRRRV</sequence>
<protein>
    <recommendedName>
        <fullName evidence="1">Small ribosomal subunit protein uS11</fullName>
    </recommendedName>
    <alternativeName>
        <fullName evidence="2">30S ribosomal protein S11</fullName>
    </alternativeName>
</protein>
<name>RS11_DESAL</name>
<proteinExistence type="inferred from homology"/>
<comment type="function">
    <text evidence="1">Located on the platform of the 30S subunit, it bridges several disparate RNA helices of the 16S rRNA. Forms part of the Shine-Dalgarno cleft in the 70S ribosome.</text>
</comment>
<comment type="subunit">
    <text evidence="1">Part of the 30S ribosomal subunit. Interacts with proteins S7 and S18. Binds to IF-3.</text>
</comment>
<comment type="similarity">
    <text evidence="1">Belongs to the universal ribosomal protein uS11 family.</text>
</comment>
<accession>B8FER1</accession>
<reference key="1">
    <citation type="journal article" date="2012" name="Environ. Microbiol.">
        <title>The genome sequence of Desulfatibacillum alkenivorans AK-01: a blueprint for anaerobic alkane oxidation.</title>
        <authorList>
            <person name="Callaghan A.V."/>
            <person name="Morris B.E."/>
            <person name="Pereira I.A."/>
            <person name="McInerney M.J."/>
            <person name="Austin R.N."/>
            <person name="Groves J.T."/>
            <person name="Kukor J.J."/>
            <person name="Suflita J.M."/>
            <person name="Young L.Y."/>
            <person name="Zylstra G.J."/>
            <person name="Wawrik B."/>
        </authorList>
    </citation>
    <scope>NUCLEOTIDE SEQUENCE [LARGE SCALE GENOMIC DNA]</scope>
    <source>
        <strain>AK-01</strain>
    </source>
</reference>
<gene>
    <name evidence="1" type="primary">rpsK</name>
    <name type="ordered locus">Dalk_1891</name>
</gene>
<organism>
    <name type="scientific">Desulfatibacillum aliphaticivorans</name>
    <dbReference type="NCBI Taxonomy" id="218208"/>
    <lineage>
        <taxon>Bacteria</taxon>
        <taxon>Pseudomonadati</taxon>
        <taxon>Thermodesulfobacteriota</taxon>
        <taxon>Desulfobacteria</taxon>
        <taxon>Desulfobacterales</taxon>
        <taxon>Desulfatibacillaceae</taxon>
        <taxon>Desulfatibacillum</taxon>
    </lineage>
</organism>
<dbReference type="EMBL" id="CP001322">
    <property type="protein sequence ID" value="ACL03588.1"/>
    <property type="molecule type" value="Genomic_DNA"/>
</dbReference>
<dbReference type="RefSeq" id="WP_012611019.1">
    <property type="nucleotide sequence ID" value="NC_011768.1"/>
</dbReference>
<dbReference type="SMR" id="B8FER1"/>
<dbReference type="KEGG" id="dal:Dalk_1891"/>
<dbReference type="eggNOG" id="COG0100">
    <property type="taxonomic scope" value="Bacteria"/>
</dbReference>
<dbReference type="HOGENOM" id="CLU_072439_5_0_7"/>
<dbReference type="Proteomes" id="UP000000739">
    <property type="component" value="Chromosome"/>
</dbReference>
<dbReference type="GO" id="GO:1990904">
    <property type="term" value="C:ribonucleoprotein complex"/>
    <property type="evidence" value="ECO:0007669"/>
    <property type="project" value="UniProtKB-KW"/>
</dbReference>
<dbReference type="GO" id="GO:0005840">
    <property type="term" value="C:ribosome"/>
    <property type="evidence" value="ECO:0007669"/>
    <property type="project" value="UniProtKB-KW"/>
</dbReference>
<dbReference type="GO" id="GO:0019843">
    <property type="term" value="F:rRNA binding"/>
    <property type="evidence" value="ECO:0007669"/>
    <property type="project" value="UniProtKB-UniRule"/>
</dbReference>
<dbReference type="GO" id="GO:0003735">
    <property type="term" value="F:structural constituent of ribosome"/>
    <property type="evidence" value="ECO:0007669"/>
    <property type="project" value="InterPro"/>
</dbReference>
<dbReference type="GO" id="GO:0006412">
    <property type="term" value="P:translation"/>
    <property type="evidence" value="ECO:0007669"/>
    <property type="project" value="UniProtKB-UniRule"/>
</dbReference>
<dbReference type="FunFam" id="3.30.420.80:FF:000001">
    <property type="entry name" value="30S ribosomal protein S11"/>
    <property type="match status" value="1"/>
</dbReference>
<dbReference type="Gene3D" id="3.30.420.80">
    <property type="entry name" value="Ribosomal protein S11"/>
    <property type="match status" value="1"/>
</dbReference>
<dbReference type="HAMAP" id="MF_01310">
    <property type="entry name" value="Ribosomal_uS11"/>
    <property type="match status" value="1"/>
</dbReference>
<dbReference type="InterPro" id="IPR001971">
    <property type="entry name" value="Ribosomal_uS11"/>
</dbReference>
<dbReference type="InterPro" id="IPR019981">
    <property type="entry name" value="Ribosomal_uS11_bac-type"/>
</dbReference>
<dbReference type="InterPro" id="IPR018102">
    <property type="entry name" value="Ribosomal_uS11_CS"/>
</dbReference>
<dbReference type="InterPro" id="IPR036967">
    <property type="entry name" value="Ribosomal_uS11_sf"/>
</dbReference>
<dbReference type="NCBIfam" id="NF003698">
    <property type="entry name" value="PRK05309.1"/>
    <property type="match status" value="1"/>
</dbReference>
<dbReference type="NCBIfam" id="TIGR03632">
    <property type="entry name" value="uS11_bact"/>
    <property type="match status" value="1"/>
</dbReference>
<dbReference type="PANTHER" id="PTHR11759">
    <property type="entry name" value="40S RIBOSOMAL PROTEIN S14/30S RIBOSOMAL PROTEIN S11"/>
    <property type="match status" value="1"/>
</dbReference>
<dbReference type="Pfam" id="PF00411">
    <property type="entry name" value="Ribosomal_S11"/>
    <property type="match status" value="1"/>
</dbReference>
<dbReference type="PIRSF" id="PIRSF002131">
    <property type="entry name" value="Ribosomal_S11"/>
    <property type="match status" value="1"/>
</dbReference>
<dbReference type="SUPFAM" id="SSF53137">
    <property type="entry name" value="Translational machinery components"/>
    <property type="match status" value="1"/>
</dbReference>
<dbReference type="PROSITE" id="PS00054">
    <property type="entry name" value="RIBOSOMAL_S11"/>
    <property type="match status" value="1"/>
</dbReference>
<keyword id="KW-1185">Reference proteome</keyword>
<keyword id="KW-0687">Ribonucleoprotein</keyword>
<keyword id="KW-0689">Ribosomal protein</keyword>
<keyword id="KW-0694">RNA-binding</keyword>
<keyword id="KW-0699">rRNA-binding</keyword>
<feature type="chain" id="PRO_1000141082" description="Small ribosomal subunit protein uS11">
    <location>
        <begin position="1"/>
        <end position="128"/>
    </location>
</feature>